<accession>Q9BP82</accession>
<evidence type="ECO:0000250" key="1"/>
<evidence type="ECO:0000255" key="2"/>
<evidence type="ECO:0000305" key="3"/>
<keyword id="KW-1015">Disulfide bond</keyword>
<keyword id="KW-0960">Knottin</keyword>
<keyword id="KW-0528">Neurotoxin</keyword>
<keyword id="KW-0873">Pyrrolidone carboxylic acid</keyword>
<keyword id="KW-0964">Secreted</keyword>
<keyword id="KW-0732">Signal</keyword>
<keyword id="KW-0800">Toxin</keyword>
<sequence>MKLTCVLIIAVLFLTACQLTTGEQKDHALRSTDKNSKLTRQCTPVGGYCSRHHHCCSNHCIKSIGRCVAH</sequence>
<proteinExistence type="evidence at transcript level"/>
<comment type="subcellular location">
    <subcellularLocation>
        <location evidence="1">Secreted</location>
    </subcellularLocation>
</comment>
<comment type="tissue specificity">
    <text>Expressed by the venom duct.</text>
</comment>
<comment type="domain">
    <text evidence="1">The presence of a 'disulfide through disulfide knot' structurally defines this protein as a knottin.</text>
</comment>
<comment type="domain">
    <text>The cysteine framework is VI/VII (C-C-CC-C-C).</text>
</comment>
<comment type="similarity">
    <text evidence="3">Belongs to the conotoxin O1 superfamily.</text>
</comment>
<protein>
    <recommendedName>
        <fullName>Conotoxin ArMKLT2-0111</fullName>
    </recommendedName>
</protein>
<reference key="1">
    <citation type="journal article" date="2001" name="Mol. Biol. Evol.">
        <title>Mechanisms for evolving hypervariability: the case of conopeptides.</title>
        <authorList>
            <person name="Conticello S.G."/>
            <person name="Gilad Y."/>
            <person name="Avidan N."/>
            <person name="Ben-Asher E."/>
            <person name="Levy Z."/>
            <person name="Fainzilber M."/>
        </authorList>
    </citation>
    <scope>NUCLEOTIDE SEQUENCE [MRNA]</scope>
    <source>
        <tissue>Venom duct</tissue>
    </source>
</reference>
<feature type="signal peptide" evidence="2">
    <location>
        <begin position="1"/>
        <end position="22"/>
    </location>
</feature>
<feature type="propeptide" id="PRO_0000404740" evidence="1">
    <location>
        <begin position="23"/>
        <end position="40"/>
    </location>
</feature>
<feature type="peptide" id="PRO_0000404741" description="Conotoxin ArMKLT2-0111">
    <location>
        <begin position="41"/>
        <end position="70"/>
    </location>
</feature>
<feature type="modified residue" description="Pyrrolidone carboxylic acid" evidence="1">
    <location>
        <position position="41"/>
    </location>
</feature>
<feature type="disulfide bond" evidence="1">
    <location>
        <begin position="42"/>
        <end position="56"/>
    </location>
</feature>
<feature type="disulfide bond" evidence="1">
    <location>
        <begin position="49"/>
        <end position="60"/>
    </location>
</feature>
<feature type="disulfide bond" evidence="1">
    <location>
        <begin position="55"/>
        <end position="67"/>
    </location>
</feature>
<name>O1614_CONAE</name>
<dbReference type="EMBL" id="AF215056">
    <property type="protein sequence ID" value="AAG60484.1"/>
    <property type="molecule type" value="mRNA"/>
</dbReference>
<dbReference type="SMR" id="Q9BP82"/>
<dbReference type="ConoServer" id="743">
    <property type="toxin name" value="Ar6.14 precursor"/>
</dbReference>
<dbReference type="GO" id="GO:0005576">
    <property type="term" value="C:extracellular region"/>
    <property type="evidence" value="ECO:0007669"/>
    <property type="project" value="UniProtKB-SubCell"/>
</dbReference>
<dbReference type="GO" id="GO:0008200">
    <property type="term" value="F:ion channel inhibitor activity"/>
    <property type="evidence" value="ECO:0007669"/>
    <property type="project" value="InterPro"/>
</dbReference>
<dbReference type="GO" id="GO:0090729">
    <property type="term" value="F:toxin activity"/>
    <property type="evidence" value="ECO:0007669"/>
    <property type="project" value="UniProtKB-KW"/>
</dbReference>
<dbReference type="InterPro" id="IPR004214">
    <property type="entry name" value="Conotoxin"/>
</dbReference>
<dbReference type="Pfam" id="PF02950">
    <property type="entry name" value="Conotoxin"/>
    <property type="match status" value="1"/>
</dbReference>
<organism>
    <name type="scientific">Conus arenatus</name>
    <name type="common">Sand-dusted cone</name>
    <dbReference type="NCBI Taxonomy" id="89451"/>
    <lineage>
        <taxon>Eukaryota</taxon>
        <taxon>Metazoa</taxon>
        <taxon>Spiralia</taxon>
        <taxon>Lophotrochozoa</taxon>
        <taxon>Mollusca</taxon>
        <taxon>Gastropoda</taxon>
        <taxon>Caenogastropoda</taxon>
        <taxon>Neogastropoda</taxon>
        <taxon>Conoidea</taxon>
        <taxon>Conidae</taxon>
        <taxon>Conus</taxon>
    </lineage>
</organism>